<dbReference type="EC" id="3.2.1.78"/>
<dbReference type="EMBL" id="AC096687">
    <property type="protein sequence ID" value="AAL79758.1"/>
    <property type="molecule type" value="Genomic_DNA"/>
</dbReference>
<dbReference type="EMBL" id="DP000009">
    <property type="protein sequence ID" value="ABF99676.1"/>
    <property type="molecule type" value="Genomic_DNA"/>
</dbReference>
<dbReference type="EMBL" id="DP000009">
    <property type="protein sequence ID" value="ABF99677.1"/>
    <property type="molecule type" value="Genomic_DNA"/>
</dbReference>
<dbReference type="EMBL" id="AP008209">
    <property type="protein sequence ID" value="BAF13691.1"/>
    <property type="molecule type" value="Genomic_DNA"/>
</dbReference>
<dbReference type="EMBL" id="AP014959">
    <property type="protein sequence ID" value="BAS87176.1"/>
    <property type="molecule type" value="Genomic_DNA"/>
</dbReference>
<dbReference type="EMBL" id="AK106915">
    <property type="status" value="NOT_ANNOTATED_CDS"/>
    <property type="molecule type" value="mRNA"/>
</dbReference>
<dbReference type="RefSeq" id="XP_015628087.1">
    <property type="nucleotide sequence ID" value="XM_015772601.1"/>
</dbReference>
<dbReference type="RefSeq" id="XP_015628088.1">
    <property type="nucleotide sequence ID" value="XM_015772602.1"/>
</dbReference>
<dbReference type="SMR" id="Q10B67"/>
<dbReference type="FunCoup" id="Q10B67">
    <property type="interactions" value="56"/>
</dbReference>
<dbReference type="STRING" id="39947.Q10B67"/>
<dbReference type="CAZy" id="GH5">
    <property type="family name" value="Glycoside Hydrolase Family 5"/>
</dbReference>
<dbReference type="PaxDb" id="39947-Q10B67"/>
<dbReference type="EnsemblPlants" id="Os03t0828500-01">
    <molecule id="Q10B67-1"/>
    <property type="protein sequence ID" value="Os03t0828500-01"/>
    <property type="gene ID" value="Os03g0828500"/>
</dbReference>
<dbReference type="Gramene" id="Os03t0828500-01">
    <molecule id="Q10B67-1"/>
    <property type="protein sequence ID" value="Os03t0828500-01"/>
    <property type="gene ID" value="Os03g0828500"/>
</dbReference>
<dbReference type="KEGG" id="dosa:Os03g0828500"/>
<dbReference type="eggNOG" id="ENOG502QS4Q">
    <property type="taxonomic scope" value="Eukaryota"/>
</dbReference>
<dbReference type="HOGENOM" id="CLU_031603_0_0_1"/>
<dbReference type="InParanoid" id="Q10B67"/>
<dbReference type="OMA" id="QYVAWAR"/>
<dbReference type="OrthoDB" id="406631at2759"/>
<dbReference type="Proteomes" id="UP000000763">
    <property type="component" value="Chromosome 3"/>
</dbReference>
<dbReference type="Proteomes" id="UP000059680">
    <property type="component" value="Chromosome 3"/>
</dbReference>
<dbReference type="GO" id="GO:0016985">
    <property type="term" value="F:mannan endo-1,4-beta-mannosidase activity"/>
    <property type="evidence" value="ECO:0000318"/>
    <property type="project" value="GO_Central"/>
</dbReference>
<dbReference type="GO" id="GO:0000272">
    <property type="term" value="P:polysaccharide catabolic process"/>
    <property type="evidence" value="ECO:0007669"/>
    <property type="project" value="InterPro"/>
</dbReference>
<dbReference type="FunFam" id="3.20.20.80:FF:000012">
    <property type="entry name" value="Mannan endo-1,4-beta-mannosidase 6"/>
    <property type="match status" value="1"/>
</dbReference>
<dbReference type="Gene3D" id="3.20.20.80">
    <property type="entry name" value="Glycosidases"/>
    <property type="match status" value="1"/>
</dbReference>
<dbReference type="InterPro" id="IPR001547">
    <property type="entry name" value="Glyco_hydro_5"/>
</dbReference>
<dbReference type="InterPro" id="IPR017853">
    <property type="entry name" value="Glycoside_hydrolase_SF"/>
</dbReference>
<dbReference type="InterPro" id="IPR045053">
    <property type="entry name" value="MAN-like"/>
</dbReference>
<dbReference type="PANTHER" id="PTHR31451">
    <property type="match status" value="1"/>
</dbReference>
<dbReference type="PANTHER" id="PTHR31451:SF36">
    <property type="entry name" value="MANNAN ENDO-1,4-BETA-MANNOSIDASE 4"/>
    <property type="match status" value="1"/>
</dbReference>
<dbReference type="Pfam" id="PF00150">
    <property type="entry name" value="Cellulase"/>
    <property type="match status" value="1"/>
</dbReference>
<dbReference type="SUPFAM" id="SSF51445">
    <property type="entry name" value="(Trans)glycosidases"/>
    <property type="match status" value="1"/>
</dbReference>
<feature type="chain" id="PRO_0000277485" description="Mannan endo-1,4-beta-mannosidase 4">
    <location>
        <begin position="1"/>
        <end position="461"/>
    </location>
</feature>
<feature type="active site" description="Proton donor" evidence="2">
    <location>
        <position position="196"/>
    </location>
</feature>
<feature type="active site" description="Nucleophile" evidence="2">
    <location>
        <position position="314"/>
    </location>
</feature>
<feature type="binding site" evidence="1">
    <location>
        <position position="80"/>
    </location>
    <ligand>
        <name>substrate</name>
    </ligand>
</feature>
<feature type="binding site" evidence="1">
    <location>
        <position position="195"/>
    </location>
    <ligand>
        <name>substrate</name>
    </ligand>
</feature>
<feature type="binding site" evidence="1">
    <location>
        <position position="274"/>
    </location>
    <ligand>
        <name>substrate</name>
    </ligand>
</feature>
<feature type="binding site" evidence="1">
    <location>
        <position position="357"/>
    </location>
    <ligand>
        <name>substrate</name>
    </ligand>
</feature>
<feature type="binding site" evidence="1">
    <location>
        <position position="364"/>
    </location>
    <ligand>
        <name>substrate</name>
    </ligand>
</feature>
<feature type="splice variant" id="VSP_023021" description="In isoform 2." evidence="4">
    <location>
        <begin position="1"/>
        <end position="22"/>
    </location>
</feature>
<feature type="sequence conflict" description="In Ref. 5; AK106915." evidence="4" ref="5">
    <original>G</original>
    <variation>S</variation>
    <location>
        <position position="421"/>
    </location>
</feature>
<name>MAN4_ORYSJ</name>
<evidence type="ECO:0000250" key="1">
    <source>
        <dbReference type="UniProtKB" id="B4XC07"/>
    </source>
</evidence>
<evidence type="ECO:0000250" key="2">
    <source>
        <dbReference type="UniProtKB" id="Q99036"/>
    </source>
</evidence>
<evidence type="ECO:0000269" key="3">
    <source>
    </source>
</evidence>
<evidence type="ECO:0000305" key="4"/>
<sequence length="461" mass="50739">MSSCALVQRPPPWRAAVAPGDGMVAVDGTQFVVDCGRTIFFSGFNAYWLMMMAADPALRGAVATAFQQASAHGLNLARTWAFSDGGDQPLQSSPGVYNETMFQGLDFVIAEARRHGIYLLLCLTNNFDNFGGKRQYVRWAGDAGHNLTSDDDFFTSTIVKSYFKNHVKTVLTRVNTLTGVAYKDDPTIFAWELMNEPRCYADPTGAMVQAWVEEMAPYVKSVDGRHLVTPGLEGFYGAGEHESKELNPWGIYYGTNYVATHRTAAVDFATIHLYPDVWLWGSSADEQATFFRNWTRSHIDATAAYLGMPLLVTEYGKFLWKEVGANKAQRNYFLDLVLDAIYASASRGGPLVGGAFWQLLLDGDIVAGMDSLRDGYEIILAEDSRAASIIGEHSEQLAALNGQDADVLCRRASSHRRTRLGNSLSCGGGDTLELLLRMVLACFVSLSRSISSFIVQNFILL</sequence>
<keyword id="KW-0025">Alternative splicing</keyword>
<keyword id="KW-0326">Glycosidase</keyword>
<keyword id="KW-0378">Hydrolase</keyword>
<keyword id="KW-1185">Reference proteome</keyword>
<comment type="catalytic activity">
    <reaction>
        <text>Random hydrolysis of (1-&gt;4)-beta-D-mannosidic linkages in mannans, galactomannans and glucomannans.</text>
        <dbReference type="EC" id="3.2.1.78"/>
    </reaction>
</comment>
<comment type="alternative products">
    <event type="alternative splicing"/>
    <isoform>
        <id>Q10B67-1</id>
        <name>1</name>
        <sequence type="displayed"/>
    </isoform>
    <isoform>
        <id>Q10B67-2</id>
        <name>2</name>
        <sequence type="described" ref="VSP_023021"/>
    </isoform>
</comment>
<comment type="tissue specificity">
    <text evidence="3">Ubiquitous.</text>
</comment>
<comment type="similarity">
    <text evidence="4">Belongs to the glycosyl hydrolase 5 (cellulase A) family.</text>
</comment>
<proteinExistence type="evidence at transcript level"/>
<gene>
    <name type="primary">MAN4</name>
    <name type="ordered locus">Os03g0828500</name>
    <name type="ordered locus">LOC_Os03g61280</name>
    <name type="ORF">OSJNBa0010E04.2</name>
</gene>
<reference key="1">
    <citation type="journal article" date="2005" name="Genome Res.">
        <title>Sequence, annotation, and analysis of synteny between rice chromosome 3 and diverged grass species.</title>
        <authorList>
            <consortium name="The rice chromosome 3 sequencing consortium"/>
            <person name="Buell C.R."/>
            <person name="Yuan Q."/>
            <person name="Ouyang S."/>
            <person name="Liu J."/>
            <person name="Zhu W."/>
            <person name="Wang A."/>
            <person name="Maiti R."/>
            <person name="Haas B."/>
            <person name="Wortman J."/>
            <person name="Pertea M."/>
            <person name="Jones K.M."/>
            <person name="Kim M."/>
            <person name="Overton L."/>
            <person name="Tsitrin T."/>
            <person name="Fadrosh D."/>
            <person name="Bera J."/>
            <person name="Weaver B."/>
            <person name="Jin S."/>
            <person name="Johri S."/>
            <person name="Reardon M."/>
            <person name="Webb K."/>
            <person name="Hill J."/>
            <person name="Moffat K."/>
            <person name="Tallon L."/>
            <person name="Van Aken S."/>
            <person name="Lewis M."/>
            <person name="Utterback T."/>
            <person name="Feldblyum T."/>
            <person name="Zismann V."/>
            <person name="Iobst S."/>
            <person name="Hsiao J."/>
            <person name="de Vazeille A.R."/>
            <person name="Salzberg S.L."/>
            <person name="White O."/>
            <person name="Fraser C.M."/>
            <person name="Yu Y."/>
            <person name="Kim H."/>
            <person name="Rambo T."/>
            <person name="Currie J."/>
            <person name="Collura K."/>
            <person name="Kernodle-Thompson S."/>
            <person name="Wei F."/>
            <person name="Kudrna K."/>
            <person name="Ammiraju J.S.S."/>
            <person name="Luo M."/>
            <person name="Goicoechea J.L."/>
            <person name="Wing R.A."/>
            <person name="Henry D."/>
            <person name="Oates R."/>
            <person name="Palmer M."/>
            <person name="Pries G."/>
            <person name="Saski C."/>
            <person name="Simmons J."/>
            <person name="Soderlund C."/>
            <person name="Nelson W."/>
            <person name="de la Bastide M."/>
            <person name="Spiegel L."/>
            <person name="Nascimento L."/>
            <person name="Huang E."/>
            <person name="Preston R."/>
            <person name="Zutavern T."/>
            <person name="Palmer L."/>
            <person name="O'Shaughnessy A."/>
            <person name="Dike S."/>
            <person name="McCombie W.R."/>
            <person name="Minx P."/>
            <person name="Cordum H."/>
            <person name="Wilson R."/>
            <person name="Jin W."/>
            <person name="Lee H.R."/>
            <person name="Jiang J."/>
            <person name="Jackson S."/>
        </authorList>
    </citation>
    <scope>NUCLEOTIDE SEQUENCE [LARGE SCALE GENOMIC DNA]</scope>
    <source>
        <strain>cv. Nipponbare</strain>
    </source>
</reference>
<reference key="2">
    <citation type="journal article" date="2005" name="Nature">
        <title>The map-based sequence of the rice genome.</title>
        <authorList>
            <consortium name="International rice genome sequencing project (IRGSP)"/>
        </authorList>
    </citation>
    <scope>NUCLEOTIDE SEQUENCE [LARGE SCALE GENOMIC DNA]</scope>
    <source>
        <strain>cv. Nipponbare</strain>
    </source>
</reference>
<reference key="3">
    <citation type="journal article" date="2008" name="Nucleic Acids Res.">
        <title>The rice annotation project database (RAP-DB): 2008 update.</title>
        <authorList>
            <consortium name="The rice annotation project (RAP)"/>
        </authorList>
    </citation>
    <scope>GENOME REANNOTATION</scope>
    <source>
        <strain>cv. Nipponbare</strain>
    </source>
</reference>
<reference key="4">
    <citation type="journal article" date="2013" name="Rice">
        <title>Improvement of the Oryza sativa Nipponbare reference genome using next generation sequence and optical map data.</title>
        <authorList>
            <person name="Kawahara Y."/>
            <person name="de la Bastide M."/>
            <person name="Hamilton J.P."/>
            <person name="Kanamori H."/>
            <person name="McCombie W.R."/>
            <person name="Ouyang S."/>
            <person name="Schwartz D.C."/>
            <person name="Tanaka T."/>
            <person name="Wu J."/>
            <person name="Zhou S."/>
            <person name="Childs K.L."/>
            <person name="Davidson R.M."/>
            <person name="Lin H."/>
            <person name="Quesada-Ocampo L."/>
            <person name="Vaillancourt B."/>
            <person name="Sakai H."/>
            <person name="Lee S.S."/>
            <person name="Kim J."/>
            <person name="Numa H."/>
            <person name="Itoh T."/>
            <person name="Buell C.R."/>
            <person name="Matsumoto T."/>
        </authorList>
    </citation>
    <scope>GENOME REANNOTATION</scope>
    <source>
        <strain>cv. Nipponbare</strain>
    </source>
</reference>
<reference key="5">
    <citation type="journal article" date="2003" name="Science">
        <title>Collection, mapping, and annotation of over 28,000 cDNA clones from japonica rice.</title>
        <authorList>
            <consortium name="The rice full-length cDNA consortium"/>
        </authorList>
    </citation>
    <scope>NUCLEOTIDE SEQUENCE [LARGE SCALE MRNA] (ISOFORM 1)</scope>
    <source>
        <strain>cv. Nipponbare</strain>
    </source>
</reference>
<reference key="6">
    <citation type="journal article" date="2007" name="Funct. Integr. Genomics">
        <title>The endo-beta-mannanase gene families in Arabidopsis, rice, and poplar.</title>
        <authorList>
            <person name="Yuan J.S."/>
            <person name="Yang X."/>
            <person name="Lai J."/>
            <person name="Lin H."/>
            <person name="Cheng Z.-M."/>
            <person name="Nonogaki H."/>
            <person name="Chen F."/>
        </authorList>
    </citation>
    <scope>GENE FAMILY</scope>
    <scope>TISSUE SPECIFICITY</scope>
</reference>
<organism>
    <name type="scientific">Oryza sativa subsp. japonica</name>
    <name type="common">Rice</name>
    <dbReference type="NCBI Taxonomy" id="39947"/>
    <lineage>
        <taxon>Eukaryota</taxon>
        <taxon>Viridiplantae</taxon>
        <taxon>Streptophyta</taxon>
        <taxon>Embryophyta</taxon>
        <taxon>Tracheophyta</taxon>
        <taxon>Spermatophyta</taxon>
        <taxon>Magnoliopsida</taxon>
        <taxon>Liliopsida</taxon>
        <taxon>Poales</taxon>
        <taxon>Poaceae</taxon>
        <taxon>BOP clade</taxon>
        <taxon>Oryzoideae</taxon>
        <taxon>Oryzeae</taxon>
        <taxon>Oryzinae</taxon>
        <taxon>Oryza</taxon>
        <taxon>Oryza sativa</taxon>
    </lineage>
</organism>
<protein>
    <recommendedName>
        <fullName>Mannan endo-1,4-beta-mannosidase 4</fullName>
        <ecNumber>3.2.1.78</ecNumber>
    </recommendedName>
    <alternativeName>
        <fullName>Beta-mannanase 4</fullName>
    </alternativeName>
    <alternativeName>
        <fullName>Endo-beta-1,4-mannanase 4</fullName>
    </alternativeName>
    <alternativeName>
        <fullName>OsMAN4</fullName>
    </alternativeName>
</protein>
<accession>Q10B67</accession>
<accession>A0A0P0W5B7</accession>
<accession>Q10B68</accession>
<accession>Q8SAY2</accession>